<keyword id="KW-0004">4Fe-4S</keyword>
<keyword id="KW-0249">Electron transport</keyword>
<keyword id="KW-0408">Iron</keyword>
<keyword id="KW-0411">Iron-sulfur</keyword>
<keyword id="KW-0479">Metal-binding</keyword>
<keyword id="KW-0500">Molybdenum</keyword>
<keyword id="KW-0534">Nitrate assimilation</keyword>
<keyword id="KW-0560">Oxidoreductase</keyword>
<keyword id="KW-0574">Periplasm</keyword>
<keyword id="KW-0732">Signal</keyword>
<keyword id="KW-0813">Transport</keyword>
<name>NAPA_CAMJ8</name>
<accession>A8FLJ3</accession>
<proteinExistence type="inferred from homology"/>
<comment type="function">
    <text evidence="1">Catalytic subunit of the periplasmic nitrate reductase complex NapAB. Receives electrons from NapB and catalyzes the reduction of nitrate to nitrite.</text>
</comment>
<comment type="catalytic activity">
    <reaction evidence="1">
        <text>2 Fe(II)-[cytochrome] + nitrate + 2 H(+) = 2 Fe(III)-[cytochrome] + nitrite + H2O</text>
        <dbReference type="Rhea" id="RHEA:12909"/>
        <dbReference type="Rhea" id="RHEA-COMP:11777"/>
        <dbReference type="Rhea" id="RHEA-COMP:11778"/>
        <dbReference type="ChEBI" id="CHEBI:15377"/>
        <dbReference type="ChEBI" id="CHEBI:15378"/>
        <dbReference type="ChEBI" id="CHEBI:16301"/>
        <dbReference type="ChEBI" id="CHEBI:17632"/>
        <dbReference type="ChEBI" id="CHEBI:29033"/>
        <dbReference type="ChEBI" id="CHEBI:29034"/>
        <dbReference type="EC" id="1.9.6.1"/>
    </reaction>
</comment>
<comment type="cofactor">
    <cofactor evidence="1">
        <name>[4Fe-4S] cluster</name>
        <dbReference type="ChEBI" id="CHEBI:49883"/>
    </cofactor>
    <text evidence="1">Binds 1 [4Fe-4S] cluster.</text>
</comment>
<comment type="cofactor">
    <cofactor evidence="1">
        <name>Mo-bis(molybdopterin guanine dinucleotide)</name>
        <dbReference type="ChEBI" id="CHEBI:60539"/>
    </cofactor>
    <text evidence="1">Binds 1 molybdenum-bis(molybdopterin guanine dinucleotide) (Mo-bis-MGD) cofactor per subunit.</text>
</comment>
<comment type="subunit">
    <text evidence="1">Component of the periplasmic nitrate reductase NapAB complex composed of NapA and NapB.</text>
</comment>
<comment type="subcellular location">
    <subcellularLocation>
        <location evidence="1">Periplasm</location>
    </subcellularLocation>
</comment>
<comment type="PTM">
    <text evidence="1">Predicted to be exported by the Tat system. The position of the signal peptide cleavage has not been experimentally proven.</text>
</comment>
<comment type="similarity">
    <text evidence="1">Belongs to the prokaryotic molybdopterin-containing oxidoreductase family. NasA/NapA/NarB subfamily.</text>
</comment>
<organism>
    <name type="scientific">Campylobacter jejuni subsp. jejuni serotype O:6 (strain 81116 / NCTC 11828)</name>
    <dbReference type="NCBI Taxonomy" id="407148"/>
    <lineage>
        <taxon>Bacteria</taxon>
        <taxon>Pseudomonadati</taxon>
        <taxon>Campylobacterota</taxon>
        <taxon>Epsilonproteobacteria</taxon>
        <taxon>Campylobacterales</taxon>
        <taxon>Campylobacteraceae</taxon>
        <taxon>Campylobacter</taxon>
    </lineage>
</organism>
<feature type="signal peptide" description="Tat-type signal" evidence="1">
    <location>
        <begin position="1"/>
        <end position="30"/>
    </location>
</feature>
<feature type="chain" id="PRO_1000073641" description="Periplasmic nitrate reductase" evidence="1">
    <location>
        <begin position="31"/>
        <end position="924"/>
    </location>
</feature>
<feature type="domain" description="4Fe-4S Mo/W bis-MGD-type" evidence="1">
    <location>
        <begin position="35"/>
        <end position="91"/>
    </location>
</feature>
<feature type="binding site" evidence="1">
    <location>
        <position position="42"/>
    </location>
    <ligand>
        <name>[4Fe-4S] cluster</name>
        <dbReference type="ChEBI" id="CHEBI:49883"/>
    </ligand>
</feature>
<feature type="binding site" evidence="1">
    <location>
        <position position="45"/>
    </location>
    <ligand>
        <name>[4Fe-4S] cluster</name>
        <dbReference type="ChEBI" id="CHEBI:49883"/>
    </ligand>
</feature>
<feature type="binding site" evidence="1">
    <location>
        <position position="49"/>
    </location>
    <ligand>
        <name>[4Fe-4S] cluster</name>
        <dbReference type="ChEBI" id="CHEBI:49883"/>
    </ligand>
</feature>
<feature type="binding site" evidence="1">
    <location>
        <position position="77"/>
    </location>
    <ligand>
        <name>[4Fe-4S] cluster</name>
        <dbReference type="ChEBI" id="CHEBI:49883"/>
    </ligand>
</feature>
<feature type="binding site" evidence="1">
    <location>
        <position position="79"/>
    </location>
    <ligand>
        <name>Mo-bis(molybdopterin guanine dinucleotide)</name>
        <dbReference type="ChEBI" id="CHEBI:60539"/>
    </ligand>
</feature>
<feature type="binding site" evidence="1">
    <location>
        <position position="147"/>
    </location>
    <ligand>
        <name>Mo-bis(molybdopterin guanine dinucleotide)</name>
        <dbReference type="ChEBI" id="CHEBI:60539"/>
    </ligand>
</feature>
<feature type="binding site" evidence="1">
    <location>
        <position position="172"/>
    </location>
    <ligand>
        <name>Mo-bis(molybdopterin guanine dinucleotide)</name>
        <dbReference type="ChEBI" id="CHEBI:60539"/>
    </ligand>
</feature>
<feature type="binding site" evidence="1">
    <location>
        <position position="176"/>
    </location>
    <ligand>
        <name>Mo-bis(molybdopterin guanine dinucleotide)</name>
        <dbReference type="ChEBI" id="CHEBI:60539"/>
    </ligand>
</feature>
<feature type="binding site" evidence="1">
    <location>
        <begin position="209"/>
        <end position="216"/>
    </location>
    <ligand>
        <name>Mo-bis(molybdopterin guanine dinucleotide)</name>
        <dbReference type="ChEBI" id="CHEBI:60539"/>
    </ligand>
</feature>
<feature type="binding site" evidence="1">
    <location>
        <position position="417"/>
    </location>
    <ligand>
        <name>Mo-bis(molybdopterin guanine dinucleotide)</name>
        <dbReference type="ChEBI" id="CHEBI:60539"/>
    </ligand>
</feature>
<feature type="binding site" evidence="1">
    <location>
        <position position="421"/>
    </location>
    <ligand>
        <name>Mo-bis(molybdopterin guanine dinucleotide)</name>
        <dbReference type="ChEBI" id="CHEBI:60539"/>
    </ligand>
</feature>
<feature type="binding site" evidence="1">
    <location>
        <position position="527"/>
    </location>
    <ligand>
        <name>Mo-bis(molybdopterin guanine dinucleotide)</name>
        <dbReference type="ChEBI" id="CHEBI:60539"/>
    </ligand>
</feature>
<feature type="binding site" evidence="1">
    <location>
        <begin position="552"/>
        <end position="553"/>
    </location>
    <ligand>
        <name>Mo-bis(molybdopterin guanine dinucleotide)</name>
        <dbReference type="ChEBI" id="CHEBI:60539"/>
    </ligand>
</feature>
<feature type="binding site" evidence="1">
    <location>
        <position position="575"/>
    </location>
    <ligand>
        <name>Mo-bis(molybdopterin guanine dinucleotide)</name>
        <dbReference type="ChEBI" id="CHEBI:60539"/>
    </ligand>
</feature>
<feature type="binding site" evidence="1">
    <location>
        <position position="602"/>
    </location>
    <ligand>
        <name>Mo-bis(molybdopterin guanine dinucleotide)</name>
        <dbReference type="ChEBI" id="CHEBI:60539"/>
    </ligand>
</feature>
<feature type="binding site" evidence="1">
    <location>
        <begin position="814"/>
        <end position="823"/>
    </location>
    <ligand>
        <name>Mo-bis(molybdopterin guanine dinucleotide)</name>
        <dbReference type="ChEBI" id="CHEBI:60539"/>
    </ligand>
</feature>
<feature type="binding site" evidence="1">
    <location>
        <position position="890"/>
    </location>
    <ligand>
        <name>substrate</name>
    </ligand>
</feature>
<feature type="binding site" evidence="1">
    <location>
        <position position="898"/>
    </location>
    <ligand>
        <name>Mo-bis(molybdopterin guanine dinucleotide)</name>
        <dbReference type="ChEBI" id="CHEBI:60539"/>
    </ligand>
</feature>
<feature type="binding site" evidence="1">
    <location>
        <position position="915"/>
    </location>
    <ligand>
        <name>Mo-bis(molybdopterin guanine dinucleotide)</name>
        <dbReference type="ChEBI" id="CHEBI:60539"/>
    </ligand>
</feature>
<gene>
    <name evidence="1" type="primary">napA</name>
    <name type="ordered locus">C8J_0731</name>
</gene>
<sequence>MNRRDFIKNTAIASAASVAGLSVPSSMLGAQEEDWKWDKAVCRFCGTGCGIMIARKDGKIVATKGDPAAPVNRGLNCIKGYFNAKIMYGEDRLVMPLLRMNEKGEFDKKGKFQQVSWQRAFDEMEKQFKKAYNELGVTGIGIFGSGQYTIQEGYAALKLAKAGFRTNNIDPNARHCMASAVVGFMQTFGVDEPSGCYDDIELTDTIITWGANMAEMHPILWSRVSDRKLSNLDKVKVVNLSTFSNRTSNIADIEIIFKPNTDLAIWNYIAREIVYNHPEAMDMKFIKDHCVFATGYADIGYGMRNNPNHPKFKESEKDTVEKENVITLDDEEATSLSYLGVKAGDKFEMKHQGVADKNWEISFEEFKKGLAPYTLEYTAKVAKGDDNESLEDFKKKLQELANLYIEKNRKVVSFWTMGFNQHTRGSWVNEQAYMVHFLLGKQAKPGSGAFSLTGQPSACGTAREVGTFSHRLPADMVVANPKHREISEKIWKVPAKTINPKPGSPYLNIMRDLEDGKIKFAWVQVNNPWQNTANANHWIAAAREMDNFIVVSDCYPGISAKVADLILPSAMIYEKWGAYGNAERRTQHWKQQVLPVGAAMSDTWQILEFAKRFKLKEVWKEQKVDNKLTLPSVLEEAKAMGYSEDDTLFDVLFANKEAKSFNPNDAIAKGFDNTDVKGDERKIQGSDGKEFAGYGFFVQKYLWEEYRKFGLGHGHDLADFDTYHKVRGLRWPVVNGKETQWRFNTKFDYYAKKAAPNSDFAFYGDFNKMLTNGDLIAPKDEKEHSIKNKAKIFFRPFMKAPERPSKEYPFWLATGRVLEHWHSGTMTMRVPELYRAVPEALCYMSEKDGEKLGLNQGDLVWVESRRGKVKARVDMRGRNKPPVGLVYVPWFDENVYINKVTLDATCPLSKQTDFKKCAVKIYKA</sequence>
<dbReference type="EC" id="1.9.6.1" evidence="1"/>
<dbReference type="EMBL" id="CP000814">
    <property type="protein sequence ID" value="ABV52330.1"/>
    <property type="molecule type" value="Genomic_DNA"/>
</dbReference>
<dbReference type="RefSeq" id="WP_002866908.1">
    <property type="nucleotide sequence ID" value="NC_009839.1"/>
</dbReference>
<dbReference type="SMR" id="A8FLJ3"/>
<dbReference type="KEGG" id="cju:C8J_0731"/>
<dbReference type="HOGENOM" id="CLU_000422_13_4_7"/>
<dbReference type="GO" id="GO:0016020">
    <property type="term" value="C:membrane"/>
    <property type="evidence" value="ECO:0007669"/>
    <property type="project" value="TreeGrafter"/>
</dbReference>
<dbReference type="GO" id="GO:0009325">
    <property type="term" value="C:nitrate reductase complex"/>
    <property type="evidence" value="ECO:0007669"/>
    <property type="project" value="TreeGrafter"/>
</dbReference>
<dbReference type="GO" id="GO:0042597">
    <property type="term" value="C:periplasmic space"/>
    <property type="evidence" value="ECO:0007669"/>
    <property type="project" value="UniProtKB-SubCell"/>
</dbReference>
<dbReference type="GO" id="GO:0051539">
    <property type="term" value="F:4 iron, 4 sulfur cluster binding"/>
    <property type="evidence" value="ECO:0007669"/>
    <property type="project" value="UniProtKB-KW"/>
</dbReference>
<dbReference type="GO" id="GO:0009055">
    <property type="term" value="F:electron transfer activity"/>
    <property type="evidence" value="ECO:0007669"/>
    <property type="project" value="UniProtKB-UniRule"/>
</dbReference>
<dbReference type="GO" id="GO:0005506">
    <property type="term" value="F:iron ion binding"/>
    <property type="evidence" value="ECO:0007669"/>
    <property type="project" value="UniProtKB-UniRule"/>
</dbReference>
<dbReference type="GO" id="GO:0030151">
    <property type="term" value="F:molybdenum ion binding"/>
    <property type="evidence" value="ECO:0007669"/>
    <property type="project" value="InterPro"/>
</dbReference>
<dbReference type="GO" id="GO:0043546">
    <property type="term" value="F:molybdopterin cofactor binding"/>
    <property type="evidence" value="ECO:0007669"/>
    <property type="project" value="InterPro"/>
</dbReference>
<dbReference type="GO" id="GO:0050140">
    <property type="term" value="F:nitrate reductase (cytochrome) activity"/>
    <property type="evidence" value="ECO:0007669"/>
    <property type="project" value="UniProtKB-EC"/>
</dbReference>
<dbReference type="GO" id="GO:0006777">
    <property type="term" value="P:Mo-molybdopterin cofactor biosynthetic process"/>
    <property type="evidence" value="ECO:0007669"/>
    <property type="project" value="UniProtKB-UniRule"/>
</dbReference>
<dbReference type="GO" id="GO:0042128">
    <property type="term" value="P:nitrate assimilation"/>
    <property type="evidence" value="ECO:0007669"/>
    <property type="project" value="UniProtKB-UniRule"/>
</dbReference>
<dbReference type="CDD" id="cd02791">
    <property type="entry name" value="MopB_CT_Nitrate-R-NapA-like"/>
    <property type="match status" value="1"/>
</dbReference>
<dbReference type="FunFam" id="2.40.40.20:FF:000005">
    <property type="entry name" value="Periplasmic nitrate reductase"/>
    <property type="match status" value="1"/>
</dbReference>
<dbReference type="Gene3D" id="2.40.40.20">
    <property type="match status" value="1"/>
</dbReference>
<dbReference type="Gene3D" id="3.30.200.210">
    <property type="match status" value="2"/>
</dbReference>
<dbReference type="Gene3D" id="3.40.50.740">
    <property type="match status" value="1"/>
</dbReference>
<dbReference type="Gene3D" id="3.40.228.10">
    <property type="entry name" value="Dimethylsulfoxide Reductase, domain 2"/>
    <property type="match status" value="1"/>
</dbReference>
<dbReference type="HAMAP" id="MF_01630">
    <property type="entry name" value="Nitrate_reduct_NapA"/>
    <property type="match status" value="1"/>
</dbReference>
<dbReference type="InterPro" id="IPR009010">
    <property type="entry name" value="Asp_de-COase-like_dom_sf"/>
</dbReference>
<dbReference type="InterPro" id="IPR041957">
    <property type="entry name" value="CT_Nitrate-R-NapA-like"/>
</dbReference>
<dbReference type="InterPro" id="IPR006657">
    <property type="entry name" value="MoPterin_dinucl-bd_dom"/>
</dbReference>
<dbReference type="InterPro" id="IPR006656">
    <property type="entry name" value="Mopterin_OxRdtase"/>
</dbReference>
<dbReference type="InterPro" id="IPR006963">
    <property type="entry name" value="Mopterin_OxRdtase_4Fe-4S_dom"/>
</dbReference>
<dbReference type="InterPro" id="IPR027467">
    <property type="entry name" value="MopterinOxRdtase_cofactor_BS"/>
</dbReference>
<dbReference type="InterPro" id="IPR010051">
    <property type="entry name" value="Periplasm_NO3_reductase_lsu"/>
</dbReference>
<dbReference type="InterPro" id="IPR050123">
    <property type="entry name" value="Prok_molybdopt-oxidoreductase"/>
</dbReference>
<dbReference type="InterPro" id="IPR019546">
    <property type="entry name" value="TAT_signal_bac_arc"/>
</dbReference>
<dbReference type="NCBIfam" id="TIGR01706">
    <property type="entry name" value="NAPA"/>
    <property type="match status" value="1"/>
</dbReference>
<dbReference type="NCBIfam" id="NF010055">
    <property type="entry name" value="PRK13532.1"/>
    <property type="match status" value="1"/>
</dbReference>
<dbReference type="NCBIfam" id="TIGR01409">
    <property type="entry name" value="TAT_signal_seq"/>
    <property type="match status" value="1"/>
</dbReference>
<dbReference type="PANTHER" id="PTHR43105:SF11">
    <property type="entry name" value="PERIPLASMIC NITRATE REDUCTASE"/>
    <property type="match status" value="1"/>
</dbReference>
<dbReference type="PANTHER" id="PTHR43105">
    <property type="entry name" value="RESPIRATORY NITRATE REDUCTASE"/>
    <property type="match status" value="1"/>
</dbReference>
<dbReference type="Pfam" id="PF04879">
    <property type="entry name" value="Molybdop_Fe4S4"/>
    <property type="match status" value="1"/>
</dbReference>
<dbReference type="Pfam" id="PF00384">
    <property type="entry name" value="Molybdopterin"/>
    <property type="match status" value="1"/>
</dbReference>
<dbReference type="Pfam" id="PF01568">
    <property type="entry name" value="Molydop_binding"/>
    <property type="match status" value="1"/>
</dbReference>
<dbReference type="SMART" id="SM00926">
    <property type="entry name" value="Molybdop_Fe4S4"/>
    <property type="match status" value="1"/>
</dbReference>
<dbReference type="SUPFAM" id="SSF50692">
    <property type="entry name" value="ADC-like"/>
    <property type="match status" value="1"/>
</dbReference>
<dbReference type="SUPFAM" id="SSF53706">
    <property type="entry name" value="Formate dehydrogenase/DMSO reductase, domains 1-3"/>
    <property type="match status" value="1"/>
</dbReference>
<dbReference type="PROSITE" id="PS51669">
    <property type="entry name" value="4FE4S_MOW_BIS_MGD"/>
    <property type="match status" value="1"/>
</dbReference>
<dbReference type="PROSITE" id="PS00551">
    <property type="entry name" value="MOLYBDOPTERIN_PROK_1"/>
    <property type="match status" value="1"/>
</dbReference>
<evidence type="ECO:0000255" key="1">
    <source>
        <dbReference type="HAMAP-Rule" id="MF_01630"/>
    </source>
</evidence>
<protein>
    <recommendedName>
        <fullName evidence="1">Periplasmic nitrate reductase</fullName>
        <ecNumber evidence="1">1.9.6.1</ecNumber>
    </recommendedName>
</protein>
<reference key="1">
    <citation type="journal article" date="2007" name="J. Bacteriol.">
        <title>The complete genome sequence of Campylobacter jejuni strain 81116 (NCTC11828).</title>
        <authorList>
            <person name="Pearson B.M."/>
            <person name="Gaskin D.J.H."/>
            <person name="Segers R.P.A.M."/>
            <person name="Wells J.M."/>
            <person name="Nuijten P.J.M."/>
            <person name="van Vliet A.H.M."/>
        </authorList>
    </citation>
    <scope>NUCLEOTIDE SEQUENCE [LARGE SCALE GENOMIC DNA]</scope>
    <source>
        <strain>81116 / NCTC 11828</strain>
    </source>
</reference>